<organism>
    <name type="scientific">Yersinia enterocolitica serotype O:8 / biotype 1B (strain NCTC 13174 / 8081)</name>
    <dbReference type="NCBI Taxonomy" id="393305"/>
    <lineage>
        <taxon>Bacteria</taxon>
        <taxon>Pseudomonadati</taxon>
        <taxon>Pseudomonadota</taxon>
        <taxon>Gammaproteobacteria</taxon>
        <taxon>Enterobacterales</taxon>
        <taxon>Yersiniaceae</taxon>
        <taxon>Yersinia</taxon>
    </lineage>
</organism>
<name>SPRT_YERE8</name>
<dbReference type="EMBL" id="AM286415">
    <property type="protein sequence ID" value="CAL13448.1"/>
    <property type="molecule type" value="Genomic_DNA"/>
</dbReference>
<dbReference type="RefSeq" id="WP_005173572.1">
    <property type="nucleotide sequence ID" value="NC_008800.1"/>
</dbReference>
<dbReference type="RefSeq" id="YP_001007590.1">
    <property type="nucleotide sequence ID" value="NC_008800.1"/>
</dbReference>
<dbReference type="KEGG" id="yen:YE3424"/>
<dbReference type="PATRIC" id="fig|393305.7.peg.3637"/>
<dbReference type="eggNOG" id="COG3091">
    <property type="taxonomic scope" value="Bacteria"/>
</dbReference>
<dbReference type="HOGENOM" id="CLU_113336_0_1_6"/>
<dbReference type="OrthoDB" id="267364at2"/>
<dbReference type="Proteomes" id="UP000000642">
    <property type="component" value="Chromosome"/>
</dbReference>
<dbReference type="GO" id="GO:0005737">
    <property type="term" value="C:cytoplasm"/>
    <property type="evidence" value="ECO:0007669"/>
    <property type="project" value="UniProtKB-SubCell"/>
</dbReference>
<dbReference type="GO" id="GO:0008270">
    <property type="term" value="F:zinc ion binding"/>
    <property type="evidence" value="ECO:0007669"/>
    <property type="project" value="UniProtKB-UniRule"/>
</dbReference>
<dbReference type="GO" id="GO:0006950">
    <property type="term" value="P:response to stress"/>
    <property type="evidence" value="ECO:0007669"/>
    <property type="project" value="UniProtKB-ARBA"/>
</dbReference>
<dbReference type="Gene3D" id="3.30.2010.10">
    <property type="entry name" value="Metalloproteases ('zincins'), catalytic domain"/>
    <property type="match status" value="1"/>
</dbReference>
<dbReference type="HAMAP" id="MF_00746">
    <property type="entry name" value="SprT"/>
    <property type="match status" value="1"/>
</dbReference>
<dbReference type="InterPro" id="IPR006640">
    <property type="entry name" value="SprT-like_domain"/>
</dbReference>
<dbReference type="InterPro" id="IPR035240">
    <property type="entry name" value="SprT_Zn_ribbon"/>
</dbReference>
<dbReference type="InterPro" id="IPR023483">
    <property type="entry name" value="Uncharacterised_SprT"/>
</dbReference>
<dbReference type="NCBIfam" id="NF003421">
    <property type="entry name" value="PRK04860.1"/>
    <property type="match status" value="1"/>
</dbReference>
<dbReference type="PANTHER" id="PTHR38773">
    <property type="entry name" value="PROTEIN SPRT"/>
    <property type="match status" value="1"/>
</dbReference>
<dbReference type="PANTHER" id="PTHR38773:SF1">
    <property type="entry name" value="PROTEIN SPRT"/>
    <property type="match status" value="1"/>
</dbReference>
<dbReference type="Pfam" id="PF10263">
    <property type="entry name" value="SprT-like"/>
    <property type="match status" value="1"/>
</dbReference>
<dbReference type="Pfam" id="PF17283">
    <property type="entry name" value="Zn_ribbon_SprT"/>
    <property type="match status" value="1"/>
</dbReference>
<dbReference type="SMART" id="SM00731">
    <property type="entry name" value="SprT"/>
    <property type="match status" value="1"/>
</dbReference>
<dbReference type="PROSITE" id="PS00142">
    <property type="entry name" value="ZINC_PROTEASE"/>
    <property type="match status" value="1"/>
</dbReference>
<protein>
    <recommendedName>
        <fullName evidence="1">Protein SprT</fullName>
    </recommendedName>
</protein>
<proteinExistence type="inferred from homology"/>
<evidence type="ECO:0000255" key="1">
    <source>
        <dbReference type="HAMAP-Rule" id="MF_00746"/>
    </source>
</evidence>
<gene>
    <name evidence="1" type="primary">sprT</name>
    <name type="ordered locus">YE3424</name>
</gene>
<reference key="1">
    <citation type="journal article" date="2006" name="PLoS Genet.">
        <title>The complete genome sequence and comparative genome analysis of the high pathogenicity Yersinia enterocolitica strain 8081.</title>
        <authorList>
            <person name="Thomson N.R."/>
            <person name="Howard S."/>
            <person name="Wren B.W."/>
            <person name="Holden M.T.G."/>
            <person name="Crossman L."/>
            <person name="Challis G.L."/>
            <person name="Churcher C."/>
            <person name="Mungall K."/>
            <person name="Brooks K."/>
            <person name="Chillingworth T."/>
            <person name="Feltwell T."/>
            <person name="Abdellah Z."/>
            <person name="Hauser H."/>
            <person name="Jagels K."/>
            <person name="Maddison M."/>
            <person name="Moule S."/>
            <person name="Sanders M."/>
            <person name="Whitehead S."/>
            <person name="Quail M.A."/>
            <person name="Dougan G."/>
            <person name="Parkhill J."/>
            <person name="Prentice M.B."/>
        </authorList>
    </citation>
    <scope>NUCLEOTIDE SEQUENCE [LARGE SCALE GENOMIC DNA]</scope>
    <source>
        <strain>NCTC 13174 / 8081</strain>
    </source>
</reference>
<feature type="chain" id="PRO_1000046545" description="Protein SprT">
    <location>
        <begin position="1"/>
        <end position="170"/>
    </location>
</feature>
<feature type="domain" description="SprT-like" evidence="1">
    <location>
        <begin position="23"/>
        <end position="165"/>
    </location>
</feature>
<feature type="active site" evidence="1">
    <location>
        <position position="79"/>
    </location>
</feature>
<feature type="binding site" evidence="1">
    <location>
        <position position="78"/>
    </location>
    <ligand>
        <name>Zn(2+)</name>
        <dbReference type="ChEBI" id="CHEBI:29105"/>
    </ligand>
</feature>
<feature type="binding site" evidence="1">
    <location>
        <position position="82"/>
    </location>
    <ligand>
        <name>Zn(2+)</name>
        <dbReference type="ChEBI" id="CHEBI:29105"/>
    </ligand>
</feature>
<sequence length="170" mass="19917">MSSLRIPIALQQAVMRCLRHKLQLANQHLGTDYPEPKINYHQRGTSAGSAYLQSFEIRLNPVLLLENQQPFIDEVVPHELAHLLVYRQFGRVPPHGKEWRWMMEHVLQVPASRTHQFAVTSVRSKTFNYQCKCQQHALTIRRHNKVQRGESEYRCRECGEKLQFVAKKTC</sequence>
<accession>A1JPT0</accession>
<keyword id="KW-0963">Cytoplasm</keyword>
<keyword id="KW-0479">Metal-binding</keyword>
<keyword id="KW-0862">Zinc</keyword>
<comment type="cofactor">
    <cofactor evidence="1">
        <name>Zn(2+)</name>
        <dbReference type="ChEBI" id="CHEBI:29105"/>
    </cofactor>
    <text evidence="1">Binds 1 zinc ion.</text>
</comment>
<comment type="subcellular location">
    <subcellularLocation>
        <location evidence="1">Cytoplasm</location>
    </subcellularLocation>
</comment>
<comment type="similarity">
    <text evidence="1">Belongs to the SprT family.</text>
</comment>